<gene>
    <name type="primary">TAA1</name>
    <name type="synonym">CKRC1</name>
    <name type="synonym">SAV3</name>
    <name type="synonym">TIR2</name>
    <name type="synonym">WEI8</name>
    <name type="ordered locus">At1g70560</name>
    <name type="ORF">F24J13.13</name>
    <name type="ORF">F5A18.26</name>
</gene>
<comment type="function">
    <text evidence="2 3 4 6">L-tryptophan aminotransferase involved in auxin (IAA) biosynthesis. Can convert L-tryptophan and pyruvate to indole-3-pyruvic acid (IPA) and alanine. Catalyzes the first step in IPA branch of the auxin biosynthetic pathway. Required for auxin production to initiate multiple change in growth in response to environmental and developmental cues. It is also active with phenylalanine, tyrosine, leucine, alanine, methionine and glutamine. Both TAA1 and TAR2 are required for maintaining proper auxin levels in roots, while TAA1, TAR1 and TAR2 are required for proper embryo patterning. Involved in the maintenance of the root stem cell niches and required for shade avoidance.</text>
</comment>
<comment type="catalytic activity">
    <reaction evidence="6">
        <text>L-tryptophan + 2-oxoglutarate = indole-3-pyruvate + L-glutamate</text>
        <dbReference type="Rhea" id="RHEA:14093"/>
        <dbReference type="ChEBI" id="CHEBI:16810"/>
        <dbReference type="ChEBI" id="CHEBI:17640"/>
        <dbReference type="ChEBI" id="CHEBI:29985"/>
        <dbReference type="ChEBI" id="CHEBI:57912"/>
        <dbReference type="EC" id="2.6.1.27"/>
    </reaction>
</comment>
<comment type="catalytic activity">
    <reaction evidence="6">
        <text>L-tryptophan + pyruvate = indole-3-pyruvate + L-alanine</text>
        <dbReference type="Rhea" id="RHEA:27586"/>
        <dbReference type="ChEBI" id="CHEBI:15361"/>
        <dbReference type="ChEBI" id="CHEBI:17640"/>
        <dbReference type="ChEBI" id="CHEBI:57912"/>
        <dbReference type="ChEBI" id="CHEBI:57972"/>
        <dbReference type="EC" id="2.6.1.99"/>
    </reaction>
</comment>
<comment type="cofactor">
    <cofactor>
        <name>pyridoxal 5'-phosphate</name>
        <dbReference type="ChEBI" id="CHEBI:597326"/>
    </cofactor>
</comment>
<comment type="activity regulation">
    <text evidence="7">Inhibited by L-kynurenine.</text>
</comment>
<comment type="biophysicochemical properties">
    <kinetics>
        <KM evidence="2">0.29 mM for L-tryptophan</KM>
        <KM evidence="2">4.74 mM for tyrosine</KM>
        <KM evidence="2">9.35 mM for phenylalanine</KM>
        <Vmax evidence="2">25.8 umol/min/ug enzyme with L-tryptophan as substrate</Vmax>
        <Vmax evidence="2">28.0 umol/min/ug enzyme with tyrosine as substrate</Vmax>
        <Vmax evidence="2">10.6 umol/min/ug enzyme with phenylalanine as substrate</Vmax>
    </kinetics>
    <phDependence>
        <text evidence="2">Optimum pH is 8.8.</text>
    </phDependence>
    <temperatureDependence>
        <text evidence="2">Optimum temperature is 55 degrees Celsius.</text>
    </temperatureDependence>
</comment>
<comment type="pathway">
    <text>Plant hormone metabolism; auxin biosynthesis.</text>
</comment>
<comment type="subcellular location">
    <subcellularLocation>
        <location evidence="2">Cytoplasm</location>
    </subcellularLocation>
</comment>
<comment type="tissue specificity">
    <text evidence="2 4 5">Expressed at the leaf margin and in the vasculature of emerging young leaves. Expressed in the quiescent center and in the vasculature of root tips. Detected in the shoot apical meristem, stems, sepals, stamen filaments, the shoot and root junction, the stigma and the base of the silique.</text>
</comment>
<comment type="developmental stage">
    <text evidence="2 4">In the heart stage embryo, expressed in the developing vasculature and the apical epidermal layer. At the torpedo stage expressed in the developing vasculature of the root, hypocotyl and cotyledons, as well as in the L1 layer of the presumptive shoot apical meristem and the adaxial epidermis of the developing cotyledons. In flowers, the expression is first restricted to the central outer layers of flower primordia, but later expands toward the base of gynoecia, becoming limited to two cell files along the meristematic medial ridge.</text>
</comment>
<comment type="induction">
    <text evidence="2 4 5">Up-regulated by trans-zeatin, ethylene and high temperature. Down-regulated by auxin and shade treatment.</text>
</comment>
<comment type="disruption phenotype">
    <text evidence="2 3 4 5">No visible phenotype under normal growth condition, but exhibits reduced levels of auxin (IAA), reduced auxin response, reduced sensitivity to ethylene and shorter hypocotyls and petioles but larger leaf area when grown in simulated shade. Defective in root gravitropic response and shows an increased resistance to cytokinin in primary root growth.</text>
</comment>
<comment type="similarity">
    <text evidence="8">Belongs to the alliinase family.</text>
</comment>
<keyword id="KW-0002">3D-structure</keyword>
<keyword id="KW-0032">Aminotransferase</keyword>
<keyword id="KW-0073">Auxin biosynthesis</keyword>
<keyword id="KW-0963">Cytoplasm</keyword>
<keyword id="KW-0663">Pyridoxal phosphate</keyword>
<keyword id="KW-1185">Reference proteome</keyword>
<keyword id="KW-0808">Transferase</keyword>
<dbReference type="EC" id="2.6.1.27"/>
<dbReference type="EC" id="2.6.1.99"/>
<dbReference type="EMBL" id="AC010796">
    <property type="protein sequence ID" value="AAG52476.1"/>
    <property type="molecule type" value="Genomic_DNA"/>
</dbReference>
<dbReference type="EMBL" id="AC011663">
    <property type="protein sequence ID" value="AAG52348.1"/>
    <property type="molecule type" value="Genomic_DNA"/>
</dbReference>
<dbReference type="EMBL" id="CP002684">
    <property type="protein sequence ID" value="AEE35079.1"/>
    <property type="molecule type" value="Genomic_DNA"/>
</dbReference>
<dbReference type="EMBL" id="AK117208">
    <property type="protein sequence ID" value="BAC41884.1"/>
    <property type="molecule type" value="mRNA"/>
</dbReference>
<dbReference type="EMBL" id="BT005339">
    <property type="protein sequence ID" value="AAO63403.1"/>
    <property type="molecule type" value="mRNA"/>
</dbReference>
<dbReference type="PIR" id="F96729">
    <property type="entry name" value="F96729"/>
</dbReference>
<dbReference type="RefSeq" id="NP_177213.1">
    <property type="nucleotide sequence ID" value="NM_105724.3"/>
</dbReference>
<dbReference type="PDB" id="3BWN">
    <property type="method" value="X-ray"/>
    <property type="resolution" value="2.25 A"/>
    <property type="chains" value="A/B/C/D/E/F=1-391"/>
</dbReference>
<dbReference type="PDB" id="3BWO">
    <property type="method" value="X-ray"/>
    <property type="resolution" value="2.40 A"/>
    <property type="chains" value="A/B/C/D/E/F=1-391"/>
</dbReference>
<dbReference type="PDBsum" id="3BWN"/>
<dbReference type="PDBsum" id="3BWO"/>
<dbReference type="SMR" id="Q9S7N2"/>
<dbReference type="STRING" id="3702.Q9S7N2"/>
<dbReference type="iPTMnet" id="Q9S7N2"/>
<dbReference type="PaxDb" id="3702-AT1G70560.1"/>
<dbReference type="ProteomicsDB" id="234114"/>
<dbReference type="EnsemblPlants" id="AT1G70560.1">
    <property type="protein sequence ID" value="AT1G70560.1"/>
    <property type="gene ID" value="AT1G70560"/>
</dbReference>
<dbReference type="GeneID" id="843393"/>
<dbReference type="Gramene" id="AT1G70560.1">
    <property type="protein sequence ID" value="AT1G70560.1"/>
    <property type="gene ID" value="AT1G70560"/>
</dbReference>
<dbReference type="KEGG" id="ath:AT1G70560"/>
<dbReference type="Araport" id="AT1G70560"/>
<dbReference type="TAIR" id="AT1G70560">
    <property type="gene designation" value="TAA1"/>
</dbReference>
<dbReference type="eggNOG" id="ENOG502QTGD">
    <property type="taxonomic scope" value="Eukaryota"/>
</dbReference>
<dbReference type="HOGENOM" id="CLU_036760_2_0_1"/>
<dbReference type="InParanoid" id="Q9S7N2"/>
<dbReference type="OMA" id="AAPYYSC"/>
<dbReference type="PhylomeDB" id="Q9S7N2"/>
<dbReference type="BioCyc" id="ARA:AT1G70560-MONOMER"/>
<dbReference type="BioCyc" id="MetaCyc:AT1G70560-MONOMER"/>
<dbReference type="BRENDA" id="2.6.1.27">
    <property type="organism ID" value="399"/>
</dbReference>
<dbReference type="BRENDA" id="2.6.1.99">
    <property type="organism ID" value="399"/>
</dbReference>
<dbReference type="UniPathway" id="UPA00151"/>
<dbReference type="EvolutionaryTrace" id="Q9S7N2"/>
<dbReference type="PRO" id="PR:Q9S7N2"/>
<dbReference type="Proteomes" id="UP000006548">
    <property type="component" value="Chromosome 1"/>
</dbReference>
<dbReference type="ExpressionAtlas" id="Q9S7N2">
    <property type="expression patterns" value="baseline and differential"/>
</dbReference>
<dbReference type="GO" id="GO:0005737">
    <property type="term" value="C:cytoplasm"/>
    <property type="evidence" value="ECO:0000314"/>
    <property type="project" value="TAIR"/>
</dbReference>
<dbReference type="GO" id="GO:0016846">
    <property type="term" value="F:carbon-sulfur lyase activity"/>
    <property type="evidence" value="ECO:0007669"/>
    <property type="project" value="InterPro"/>
</dbReference>
<dbReference type="GO" id="GO:0004021">
    <property type="term" value="F:L-alanine:2-oxoglutarate aminotransferase activity"/>
    <property type="evidence" value="ECO:0000314"/>
    <property type="project" value="TAIR"/>
</dbReference>
<dbReference type="GO" id="GO:0080099">
    <property type="term" value="F:L-methionine:2-oxoglutarate aminotransferase activity"/>
    <property type="evidence" value="ECO:0000314"/>
    <property type="project" value="TAIR"/>
</dbReference>
<dbReference type="GO" id="GO:0080130">
    <property type="term" value="F:L-phenylalanine-2-oxoglutarate transaminase activity"/>
    <property type="evidence" value="ECO:0000314"/>
    <property type="project" value="TAIR"/>
</dbReference>
<dbReference type="GO" id="GO:0047312">
    <property type="term" value="F:L-phenylalanine-pyruvate transaminase activity"/>
    <property type="evidence" value="ECO:0000314"/>
    <property type="project" value="TAIR"/>
</dbReference>
<dbReference type="GO" id="GO:0050362">
    <property type="term" value="F:L-tryptophan:2-oxoglutarate aminotransferase activity"/>
    <property type="evidence" value="ECO:0000314"/>
    <property type="project" value="TAIR"/>
</dbReference>
<dbReference type="GO" id="GO:0080097">
    <property type="term" value="F:L-tryptophan:pyruvate aminotransferase activity"/>
    <property type="evidence" value="ECO:0000314"/>
    <property type="project" value="TAIR"/>
</dbReference>
<dbReference type="GO" id="GO:0004838">
    <property type="term" value="F:L-tyrosine-2-oxoglutarate transaminase activity"/>
    <property type="evidence" value="ECO:0000314"/>
    <property type="project" value="TAIR"/>
</dbReference>
<dbReference type="GO" id="GO:0080098">
    <property type="term" value="F:L-tyrosine-pyruvate transaminase activity"/>
    <property type="evidence" value="ECO:0000314"/>
    <property type="project" value="TAIR"/>
</dbReference>
<dbReference type="GO" id="GO:0030170">
    <property type="term" value="F:pyridoxal phosphate binding"/>
    <property type="evidence" value="ECO:0000314"/>
    <property type="project" value="TAIR"/>
</dbReference>
<dbReference type="GO" id="GO:0009926">
    <property type="term" value="P:auxin polar transport"/>
    <property type="evidence" value="ECO:0000315"/>
    <property type="project" value="TAIR"/>
</dbReference>
<dbReference type="GO" id="GO:0048825">
    <property type="term" value="P:cotyledon development"/>
    <property type="evidence" value="ECO:0000316"/>
    <property type="project" value="TAIR"/>
</dbReference>
<dbReference type="GO" id="GO:0010588">
    <property type="term" value="P:cotyledon vascular tissue pattern formation"/>
    <property type="evidence" value="ECO:0000316"/>
    <property type="project" value="TAIR"/>
</dbReference>
<dbReference type="GO" id="GO:0042742">
    <property type="term" value="P:defense response to bacterium"/>
    <property type="evidence" value="ECO:0000316"/>
    <property type="project" value="TAIR"/>
</dbReference>
<dbReference type="GO" id="GO:0009793">
    <property type="term" value="P:embryo development ending in seed dormancy"/>
    <property type="evidence" value="ECO:0000316"/>
    <property type="project" value="TAIR"/>
</dbReference>
<dbReference type="GO" id="GO:0009908">
    <property type="term" value="P:flower development"/>
    <property type="evidence" value="ECO:0000316"/>
    <property type="project" value="TAIR"/>
</dbReference>
<dbReference type="GO" id="GO:0048467">
    <property type="term" value="P:gynoecium development"/>
    <property type="evidence" value="ECO:0000316"/>
    <property type="project" value="TAIR"/>
</dbReference>
<dbReference type="GO" id="GO:0009684">
    <property type="term" value="P:indoleacetic acid biosynthetic process"/>
    <property type="evidence" value="ECO:0000315"/>
    <property type="project" value="TAIR"/>
</dbReference>
<dbReference type="GO" id="GO:0048366">
    <property type="term" value="P:leaf development"/>
    <property type="evidence" value="ECO:0000315"/>
    <property type="project" value="TAIR"/>
</dbReference>
<dbReference type="GO" id="GO:0010078">
    <property type="term" value="P:maintenance of root meristem identity"/>
    <property type="evidence" value="ECO:0000316"/>
    <property type="project" value="TAIR"/>
</dbReference>
<dbReference type="GO" id="GO:0010087">
    <property type="term" value="P:phloem or xylem histogenesis"/>
    <property type="evidence" value="ECO:0000316"/>
    <property type="project" value="TAIR"/>
</dbReference>
<dbReference type="GO" id="GO:0009958">
    <property type="term" value="P:positive gravitropism"/>
    <property type="evidence" value="ECO:0000315"/>
    <property type="project" value="TAIR"/>
</dbReference>
<dbReference type="GO" id="GO:0080022">
    <property type="term" value="P:primary root development"/>
    <property type="evidence" value="ECO:0000316"/>
    <property type="project" value="TAIR"/>
</dbReference>
<dbReference type="GO" id="GO:0009723">
    <property type="term" value="P:response to ethylene"/>
    <property type="evidence" value="ECO:0000315"/>
    <property type="project" value="TAIR"/>
</dbReference>
<dbReference type="GO" id="GO:0048364">
    <property type="term" value="P:root development"/>
    <property type="evidence" value="ECO:0000315"/>
    <property type="project" value="TAIR"/>
</dbReference>
<dbReference type="GO" id="GO:0009641">
    <property type="term" value="P:shade avoidance"/>
    <property type="evidence" value="ECO:0000315"/>
    <property type="project" value="TAIR"/>
</dbReference>
<dbReference type="GO" id="GO:0048367">
    <property type="term" value="P:shoot system development"/>
    <property type="evidence" value="ECO:0000316"/>
    <property type="project" value="TAIR"/>
</dbReference>
<dbReference type="CDD" id="cd00609">
    <property type="entry name" value="AAT_like"/>
    <property type="match status" value="1"/>
</dbReference>
<dbReference type="FunFam" id="3.40.640.10:FF:000093">
    <property type="entry name" value="L-tryptophan--pyruvate aminotransferase 1"/>
    <property type="match status" value="1"/>
</dbReference>
<dbReference type="FunFam" id="3.90.1150.10:FF:000132">
    <property type="entry name" value="L-tryptophan--pyruvate aminotransferase 1"/>
    <property type="match status" value="1"/>
</dbReference>
<dbReference type="Gene3D" id="3.90.1150.10">
    <property type="entry name" value="Aspartate Aminotransferase, domain 1"/>
    <property type="match status" value="1"/>
</dbReference>
<dbReference type="Gene3D" id="2.10.25.30">
    <property type="entry name" value="EGF-like, alliinase"/>
    <property type="match status" value="1"/>
</dbReference>
<dbReference type="Gene3D" id="3.40.640.10">
    <property type="entry name" value="Type I PLP-dependent aspartate aminotransferase-like (Major domain)"/>
    <property type="match status" value="1"/>
</dbReference>
<dbReference type="InterPro" id="IPR006948">
    <property type="entry name" value="Alliinase_C"/>
</dbReference>
<dbReference type="InterPro" id="IPR037029">
    <property type="entry name" value="Alliinase_N_sf"/>
</dbReference>
<dbReference type="InterPro" id="IPR050478">
    <property type="entry name" value="Ethylene_sulfur-biosynth"/>
</dbReference>
<dbReference type="InterPro" id="IPR015424">
    <property type="entry name" value="PyrdxlP-dep_Trfase"/>
</dbReference>
<dbReference type="InterPro" id="IPR015421">
    <property type="entry name" value="PyrdxlP-dep_Trfase_major"/>
</dbReference>
<dbReference type="InterPro" id="IPR015422">
    <property type="entry name" value="PyrdxlP-dep_Trfase_small"/>
</dbReference>
<dbReference type="PANTHER" id="PTHR43795">
    <property type="entry name" value="BIFUNCTIONAL ASPARTATE AMINOTRANSFERASE AND GLUTAMATE/ASPARTATE-PREPHENATE AMINOTRANSFERASE-RELATED"/>
    <property type="match status" value="1"/>
</dbReference>
<dbReference type="PANTHER" id="PTHR43795:SF117">
    <property type="entry name" value="L-TRYPTOPHAN--PYRUVATE AMINOTRANSFERASE 1"/>
    <property type="match status" value="1"/>
</dbReference>
<dbReference type="Pfam" id="PF04864">
    <property type="entry name" value="Alliinase_C"/>
    <property type="match status" value="1"/>
</dbReference>
<dbReference type="SUPFAM" id="SSF53383">
    <property type="entry name" value="PLP-dependent transferases"/>
    <property type="match status" value="1"/>
</dbReference>
<name>TAA1_ARATH</name>
<accession>Q9S7N2</accession>
<feature type="chain" id="PRO_0000401375" description="L-tryptophan--pyruvate aminotransferase 1">
    <location>
        <begin position="1"/>
        <end position="391"/>
    </location>
</feature>
<feature type="binding site" evidence="2 9">
    <location>
        <position position="58"/>
    </location>
    <ligand>
        <name>pyridoxal 5'-phosphate</name>
        <dbReference type="ChEBI" id="CHEBI:597326"/>
    </ligand>
</feature>
<feature type="binding site" evidence="2 9">
    <location>
        <begin position="100"/>
        <end position="101"/>
    </location>
    <ligand>
        <name>pyridoxal 5'-phosphate</name>
        <dbReference type="ChEBI" id="CHEBI:597326"/>
    </ligand>
</feature>
<feature type="binding site" evidence="2 9">
    <location>
        <position position="168"/>
    </location>
    <ligand>
        <name>pyridoxal 5'-phosphate</name>
        <dbReference type="ChEBI" id="CHEBI:597326"/>
    </ligand>
</feature>
<feature type="binding site" evidence="2 9">
    <location>
        <begin position="191"/>
        <end position="194"/>
    </location>
    <ligand>
        <name>pyridoxal 5'-phosphate</name>
        <dbReference type="ChEBI" id="CHEBI:597326"/>
    </ligand>
</feature>
<feature type="binding site" evidence="2 9">
    <location>
        <begin position="214"/>
        <end position="217"/>
    </location>
    <ligand>
        <name>pyridoxal 5'-phosphate</name>
        <dbReference type="ChEBI" id="CHEBI:597326"/>
    </ligand>
</feature>
<feature type="binding site" evidence="2 9">
    <location>
        <position position="225"/>
    </location>
    <ligand>
        <name>pyridoxal 5'-phosphate</name>
        <dbReference type="ChEBI" id="CHEBI:597326"/>
    </ligand>
</feature>
<feature type="modified residue" description="N6-(pyridoxal phosphate)lysine" evidence="1">
    <location>
        <position position="217"/>
    </location>
</feature>
<feature type="mutagenesis site" description="In wei8-2; loss of activity." evidence="3">
    <original>P</original>
    <variation>S</variation>
    <location>
        <position position="166"/>
    </location>
</feature>
<feature type="mutagenesis site" description="In tir2-1; loss of activity." evidence="4">
    <original>G</original>
    <variation>E</variation>
    <location>
        <position position="171"/>
    </location>
</feature>
<feature type="mutagenesis site" description="Loss of activity." evidence="2 3">
    <original>K</original>
    <variation>A</variation>
    <location>
        <position position="217"/>
    </location>
</feature>
<feature type="mutagenesis site" description="Reduces growth rate under shade condition." evidence="2 3">
    <original>K</original>
    <variation>G</variation>
    <variation>R</variation>
    <location>
        <position position="217"/>
    </location>
</feature>
<feature type="mutagenesis site" description="In sav3-3; reduces growth rate under shade condition." evidence="2">
    <original>G</original>
    <variation>S</variation>
    <location>
        <position position="250"/>
    </location>
</feature>
<feature type="turn" evidence="10">
    <location>
        <begin position="20"/>
        <end position="22"/>
    </location>
</feature>
<feature type="helix" evidence="10">
    <location>
        <begin position="33"/>
        <end position="35"/>
    </location>
</feature>
<feature type="helix" evidence="10">
    <location>
        <begin position="36"/>
        <end position="41"/>
    </location>
</feature>
<feature type="helix" evidence="10">
    <location>
        <begin position="43"/>
        <end position="45"/>
    </location>
</feature>
<feature type="strand" evidence="10">
    <location>
        <begin position="48"/>
        <end position="50"/>
    </location>
</feature>
<feature type="turn" evidence="10">
    <location>
        <begin position="52"/>
        <end position="55"/>
    </location>
</feature>
<feature type="strand" evidence="10">
    <location>
        <begin position="64"/>
        <end position="66"/>
    </location>
</feature>
<feature type="helix" evidence="10">
    <location>
        <begin position="71"/>
        <end position="84"/>
    </location>
</feature>
<feature type="strand" evidence="10">
    <location>
        <begin position="90"/>
        <end position="98"/>
    </location>
</feature>
<feature type="helix" evidence="10">
    <location>
        <begin position="99"/>
        <end position="113"/>
    </location>
</feature>
<feature type="strand" evidence="10">
    <location>
        <begin position="115"/>
        <end position="124"/>
    </location>
</feature>
<feature type="helix" evidence="10">
    <location>
        <begin position="131"/>
        <end position="137"/>
    </location>
</feature>
<feature type="strand" evidence="10">
    <location>
        <begin position="144"/>
        <end position="150"/>
    </location>
</feature>
<feature type="strand" evidence="10">
    <location>
        <begin position="159"/>
        <end position="166"/>
    </location>
</feature>
<feature type="turn" evidence="10">
    <location>
        <begin position="168"/>
        <end position="170"/>
    </location>
</feature>
<feature type="strand" evidence="10">
    <location>
        <begin position="187"/>
        <end position="191"/>
    </location>
</feature>
<feature type="turn" evidence="10">
    <location>
        <begin position="197"/>
        <end position="199"/>
    </location>
</feature>
<feature type="strand" evidence="10">
    <location>
        <begin position="209"/>
        <end position="214"/>
    </location>
</feature>
<feature type="helix" evidence="10">
    <location>
        <begin position="215"/>
        <end position="219"/>
    </location>
</feature>
<feature type="helix" evidence="10">
    <location>
        <begin position="222"/>
        <end position="224"/>
    </location>
</feature>
<feature type="strand" evidence="10">
    <location>
        <begin position="226"/>
        <end position="231"/>
    </location>
</feature>
<feature type="helix" evidence="10">
    <location>
        <begin position="234"/>
        <end position="248"/>
    </location>
</feature>
<feature type="helix" evidence="10">
    <location>
        <begin position="253"/>
        <end position="269"/>
    </location>
</feature>
<feature type="turn" evidence="10">
    <location>
        <begin position="275"/>
        <end position="277"/>
    </location>
</feature>
<feature type="helix" evidence="10">
    <location>
        <begin position="279"/>
        <end position="299"/>
    </location>
</feature>
<feature type="strand" evidence="10">
    <location>
        <begin position="302"/>
        <end position="305"/>
    </location>
</feature>
<feature type="strand" evidence="10">
    <location>
        <begin position="312"/>
        <end position="314"/>
    </location>
</feature>
<feature type="turn" evidence="10">
    <location>
        <begin position="315"/>
        <end position="318"/>
    </location>
</feature>
<feature type="strand" evidence="10">
    <location>
        <begin position="319"/>
        <end position="321"/>
    </location>
</feature>
<feature type="strand" evidence="10">
    <location>
        <begin position="326"/>
        <end position="335"/>
    </location>
</feature>
<feature type="helix" evidence="10">
    <location>
        <begin position="338"/>
        <end position="344"/>
    </location>
</feature>
<feature type="helix" evidence="10">
    <location>
        <begin position="352"/>
        <end position="355"/>
    </location>
</feature>
<feature type="strand" evidence="10">
    <location>
        <begin position="361"/>
        <end position="366"/>
    </location>
</feature>
<feature type="helix" evidence="10">
    <location>
        <begin position="370"/>
        <end position="381"/>
    </location>
</feature>
<proteinExistence type="evidence at protein level"/>
<sequence length="391" mass="44801">MVKLENSRKPEKISNKNIPMSDFVVNLDHGDPTAYEEYWRKMGDRCTVTIRGCDLMSYFSDMTNLCWFLEPELEDAIKDLHGVVGNAATEDRYIVVGTGSTQLCQAAVHALSSLARSQPVSVVAAAPFYSTYVEETTYVRSGMYKWEGDAWGFDKKGPYIELVTSPNNPDGTIRETVVNRPDDDEAKVIHDFAYYWPHYTPITRRQDHDIMLFTFSKITGHAGSRIGWALVKDKEVAKKMVEYIIVNSIGVSKESQVRTAKILNVLKETCKSESESENFFKYGREMMKNRWEKLREVVKESDAFTLPKYPEAFCNYFGKSLESYPAFAWLGTKEETDLVSELRRHKVMSRAGERCGSDKKHVRVSMLSREDVFNVFLERLANMKLIKSIDL</sequence>
<evidence type="ECO:0000255" key="1"/>
<evidence type="ECO:0000269" key="2">
    <source>
    </source>
</evidence>
<evidence type="ECO:0000269" key="3">
    <source>
    </source>
</evidence>
<evidence type="ECO:0000269" key="4">
    <source>
    </source>
</evidence>
<evidence type="ECO:0000269" key="5">
    <source>
    </source>
</evidence>
<evidence type="ECO:0000269" key="6">
    <source>
    </source>
</evidence>
<evidence type="ECO:0000269" key="7">
    <source>
    </source>
</evidence>
<evidence type="ECO:0000305" key="8"/>
<evidence type="ECO:0007744" key="9">
    <source>
        <dbReference type="PDB" id="3BWN"/>
    </source>
</evidence>
<evidence type="ECO:0007829" key="10">
    <source>
        <dbReference type="PDB" id="3BWN"/>
    </source>
</evidence>
<reference key="1">
    <citation type="journal article" date="2000" name="Nature">
        <title>Sequence and analysis of chromosome 1 of the plant Arabidopsis thaliana.</title>
        <authorList>
            <person name="Theologis A."/>
            <person name="Ecker J.R."/>
            <person name="Palm C.J."/>
            <person name="Federspiel N.A."/>
            <person name="Kaul S."/>
            <person name="White O."/>
            <person name="Alonso J."/>
            <person name="Altafi H."/>
            <person name="Araujo R."/>
            <person name="Bowman C.L."/>
            <person name="Brooks S.Y."/>
            <person name="Buehler E."/>
            <person name="Chan A."/>
            <person name="Chao Q."/>
            <person name="Chen H."/>
            <person name="Cheuk R.F."/>
            <person name="Chin C.W."/>
            <person name="Chung M.K."/>
            <person name="Conn L."/>
            <person name="Conway A.B."/>
            <person name="Conway A.R."/>
            <person name="Creasy T.H."/>
            <person name="Dewar K."/>
            <person name="Dunn P."/>
            <person name="Etgu P."/>
            <person name="Feldblyum T.V."/>
            <person name="Feng J.-D."/>
            <person name="Fong B."/>
            <person name="Fujii C.Y."/>
            <person name="Gill J.E."/>
            <person name="Goldsmith A.D."/>
            <person name="Haas B."/>
            <person name="Hansen N.F."/>
            <person name="Hughes B."/>
            <person name="Huizar L."/>
            <person name="Hunter J.L."/>
            <person name="Jenkins J."/>
            <person name="Johnson-Hopson C."/>
            <person name="Khan S."/>
            <person name="Khaykin E."/>
            <person name="Kim C.J."/>
            <person name="Koo H.L."/>
            <person name="Kremenetskaia I."/>
            <person name="Kurtz D.B."/>
            <person name="Kwan A."/>
            <person name="Lam B."/>
            <person name="Langin-Hooper S."/>
            <person name="Lee A."/>
            <person name="Lee J.M."/>
            <person name="Lenz C.A."/>
            <person name="Li J.H."/>
            <person name="Li Y.-P."/>
            <person name="Lin X."/>
            <person name="Liu S.X."/>
            <person name="Liu Z.A."/>
            <person name="Luros J.S."/>
            <person name="Maiti R."/>
            <person name="Marziali A."/>
            <person name="Militscher J."/>
            <person name="Miranda M."/>
            <person name="Nguyen M."/>
            <person name="Nierman W.C."/>
            <person name="Osborne B.I."/>
            <person name="Pai G."/>
            <person name="Peterson J."/>
            <person name="Pham P.K."/>
            <person name="Rizzo M."/>
            <person name="Rooney T."/>
            <person name="Rowley D."/>
            <person name="Sakano H."/>
            <person name="Salzberg S.L."/>
            <person name="Schwartz J.R."/>
            <person name="Shinn P."/>
            <person name="Southwick A.M."/>
            <person name="Sun H."/>
            <person name="Tallon L.J."/>
            <person name="Tambunga G."/>
            <person name="Toriumi M.J."/>
            <person name="Town C.D."/>
            <person name="Utterback T."/>
            <person name="Van Aken S."/>
            <person name="Vaysberg M."/>
            <person name="Vysotskaia V.S."/>
            <person name="Walker M."/>
            <person name="Wu D."/>
            <person name="Yu G."/>
            <person name="Fraser C.M."/>
            <person name="Venter J.C."/>
            <person name="Davis R.W."/>
        </authorList>
    </citation>
    <scope>NUCLEOTIDE SEQUENCE [LARGE SCALE GENOMIC DNA]</scope>
    <source>
        <strain>cv. Columbia</strain>
    </source>
</reference>
<reference key="2">
    <citation type="journal article" date="2017" name="Plant J.">
        <title>Araport11: a complete reannotation of the Arabidopsis thaliana reference genome.</title>
        <authorList>
            <person name="Cheng C.Y."/>
            <person name="Krishnakumar V."/>
            <person name="Chan A.P."/>
            <person name="Thibaud-Nissen F."/>
            <person name="Schobel S."/>
            <person name="Town C.D."/>
        </authorList>
    </citation>
    <scope>GENOME REANNOTATION</scope>
    <source>
        <strain>cv. Columbia</strain>
    </source>
</reference>
<reference key="3">
    <citation type="journal article" date="2002" name="Science">
        <title>Functional annotation of a full-length Arabidopsis cDNA collection.</title>
        <authorList>
            <person name="Seki M."/>
            <person name="Narusaka M."/>
            <person name="Kamiya A."/>
            <person name="Ishida J."/>
            <person name="Satou M."/>
            <person name="Sakurai T."/>
            <person name="Nakajima M."/>
            <person name="Enju A."/>
            <person name="Akiyama K."/>
            <person name="Oono Y."/>
            <person name="Muramatsu M."/>
            <person name="Hayashizaki Y."/>
            <person name="Kawai J."/>
            <person name="Carninci P."/>
            <person name="Itoh M."/>
            <person name="Ishii Y."/>
            <person name="Arakawa T."/>
            <person name="Shibata K."/>
            <person name="Shinagawa A."/>
            <person name="Shinozaki K."/>
        </authorList>
    </citation>
    <scope>NUCLEOTIDE SEQUENCE [LARGE SCALE MRNA]</scope>
    <source>
        <strain>cv. Columbia</strain>
    </source>
</reference>
<reference key="4">
    <citation type="journal article" date="2003" name="Science">
        <title>Empirical analysis of transcriptional activity in the Arabidopsis genome.</title>
        <authorList>
            <person name="Yamada K."/>
            <person name="Lim J."/>
            <person name="Dale J.M."/>
            <person name="Chen H."/>
            <person name="Shinn P."/>
            <person name="Palm C.J."/>
            <person name="Southwick A.M."/>
            <person name="Wu H.C."/>
            <person name="Kim C.J."/>
            <person name="Nguyen M."/>
            <person name="Pham P.K."/>
            <person name="Cheuk R.F."/>
            <person name="Karlin-Newmann G."/>
            <person name="Liu S.X."/>
            <person name="Lam B."/>
            <person name="Sakano H."/>
            <person name="Wu T."/>
            <person name="Yu G."/>
            <person name="Miranda M."/>
            <person name="Quach H.L."/>
            <person name="Tripp M."/>
            <person name="Chang C.H."/>
            <person name="Lee J.M."/>
            <person name="Toriumi M.J."/>
            <person name="Chan M.M."/>
            <person name="Tang C.C."/>
            <person name="Onodera C.S."/>
            <person name="Deng J.M."/>
            <person name="Akiyama K."/>
            <person name="Ansari Y."/>
            <person name="Arakawa T."/>
            <person name="Banh J."/>
            <person name="Banno F."/>
            <person name="Bowser L."/>
            <person name="Brooks S.Y."/>
            <person name="Carninci P."/>
            <person name="Chao Q."/>
            <person name="Choy N."/>
            <person name="Enju A."/>
            <person name="Goldsmith A.D."/>
            <person name="Gurjal M."/>
            <person name="Hansen N.F."/>
            <person name="Hayashizaki Y."/>
            <person name="Johnson-Hopson C."/>
            <person name="Hsuan V.W."/>
            <person name="Iida K."/>
            <person name="Karnes M."/>
            <person name="Khan S."/>
            <person name="Koesema E."/>
            <person name="Ishida J."/>
            <person name="Jiang P.X."/>
            <person name="Jones T."/>
            <person name="Kawai J."/>
            <person name="Kamiya A."/>
            <person name="Meyers C."/>
            <person name="Nakajima M."/>
            <person name="Narusaka M."/>
            <person name="Seki M."/>
            <person name="Sakurai T."/>
            <person name="Satou M."/>
            <person name="Tamse R."/>
            <person name="Vaysberg M."/>
            <person name="Wallender E.K."/>
            <person name="Wong C."/>
            <person name="Yamamura Y."/>
            <person name="Yuan S."/>
            <person name="Shinozaki K."/>
            <person name="Davis R.W."/>
            <person name="Theologis A."/>
            <person name="Ecker J.R."/>
        </authorList>
    </citation>
    <scope>NUCLEOTIDE SEQUENCE [LARGE SCALE MRNA]</scope>
    <source>
        <strain>cv. Columbia</strain>
    </source>
</reference>
<reference key="5">
    <citation type="journal article" date="2008" name="Cell">
        <title>TAA1-mediated auxin biosynthesis is essential for hormone crosstalk and plant development.</title>
        <authorList>
            <person name="Stepanova A.N."/>
            <person name="Robertson-Hoyt J."/>
            <person name="Yun J."/>
            <person name="Benavente L.M."/>
            <person name="Xie D.Y."/>
            <person name="Dolezal K."/>
            <person name="Schlereth A."/>
            <person name="Juergens G."/>
            <person name="Alonso J.M."/>
        </authorList>
    </citation>
    <scope>FUNCTION</scope>
    <scope>DISRUPTION PHENOTYPE</scope>
    <scope>MUTAGENESIS OF PRO-166 AND LYS-217</scope>
</reference>
<reference key="6">
    <citation type="journal article" date="2009" name="Plant Physiol.">
        <title>The TRANSPORT INHIBITOR RESPONSE2 gene is required for auxin synthesis and diverse aspects of plant development.</title>
        <authorList>
            <person name="Yamada M."/>
            <person name="Greenham K."/>
            <person name="Prigge M.J."/>
            <person name="Jensen P.J."/>
            <person name="Estelle M."/>
        </authorList>
    </citation>
    <scope>FUNCTION</scope>
    <scope>MUTAGENESIS OF GLY-171</scope>
    <scope>TISSUE SPECIFICITY</scope>
    <scope>INDUCTION BY AUXIN AND HEAT</scope>
    <scope>DEVELOPMENTAL STAGE</scope>
    <scope>DISRUPTION PHENOTYPE</scope>
</reference>
<reference key="7">
    <citation type="journal article" date="2011" name="Plant Cell">
        <title>A small-molecule screen identifies L-kynurenine as a competitive inhibitor of TAA1/TAR activity in ethylene-directed auxin biosynthesis and root growth in Arabidopsis.</title>
        <authorList>
            <person name="He W."/>
            <person name="Brumos J."/>
            <person name="Li H."/>
            <person name="Ji Y."/>
            <person name="Ke M."/>
            <person name="Gong X."/>
            <person name="Zeng Q."/>
            <person name="Li W."/>
            <person name="Zhang X."/>
            <person name="An F."/>
            <person name="Wen X."/>
            <person name="Li P."/>
            <person name="Chu J."/>
            <person name="Sun X."/>
            <person name="Yan C."/>
            <person name="Yan N."/>
            <person name="Xie D.Y."/>
            <person name="Raikhel N."/>
            <person name="Yang Z."/>
            <person name="Stepanova A.N."/>
            <person name="Alonso J.M."/>
            <person name="Guo H."/>
        </authorList>
    </citation>
    <scope>ACTIVITY REGULATION</scope>
</reference>
<reference key="8">
    <citation type="journal article" date="2011" name="Plant J.">
        <title>Functional characterization of the CKRC1/TAA1 gene and dissection of hormonal actions in the Arabidopsis root.</title>
        <authorList>
            <person name="Zhou Z.Y."/>
            <person name="Zhang C.G."/>
            <person name="Wu L."/>
            <person name="Zhang C.G."/>
            <person name="Chai J."/>
            <person name="Wang M."/>
            <person name="Jha A."/>
            <person name="Jia P.F."/>
            <person name="Cui S.J."/>
            <person name="Yang M."/>
            <person name="Chen R."/>
            <person name="Guo G.Q."/>
        </authorList>
    </citation>
    <scope>TISSUE SPECIFICITY</scope>
    <scope>INDUCTION BY ETHYLENE AND CYTOKININ</scope>
    <scope>DISRUPTION PHENOTYPE</scope>
</reference>
<reference key="9">
    <citation type="journal article" date="2011" name="Proc. Natl. Acad. Sci. U.S.A.">
        <title>The main auxin biosynthesis pathway in Arabidopsis.</title>
        <authorList>
            <person name="Mashiguchi K."/>
            <person name="Tanaka K."/>
            <person name="Sakai T."/>
            <person name="Sugawara S."/>
            <person name="Kawaide H."/>
            <person name="Natsume M."/>
            <person name="Hanada A."/>
            <person name="Yaeno T."/>
            <person name="Shirasu K."/>
            <person name="Yao H."/>
            <person name="McSteen P."/>
            <person name="Zhao Y."/>
            <person name="Hayashi K."/>
            <person name="Kamiya Y."/>
            <person name="Kasahara H."/>
        </authorList>
    </citation>
    <scope>FUNCTION</scope>
    <scope>CATALYTIC ACTIVITY</scope>
</reference>
<reference key="10">
    <citation type="journal article" date="2008" name="Cell">
        <title>Rapid synthesis of auxin via a new tryptophan-dependent pathway is required for shade avoidance in plants.</title>
        <authorList>
            <person name="Tao Y."/>
            <person name="Ferrer J.L."/>
            <person name="Ljung K."/>
            <person name="Pojer F."/>
            <person name="Hong F."/>
            <person name="Long J.A."/>
            <person name="Li L."/>
            <person name="Moreno J.E."/>
            <person name="Bowman M.E."/>
            <person name="Ivans L.J."/>
            <person name="Cheng Y."/>
            <person name="Lim J."/>
            <person name="Zhao Y."/>
            <person name="Ballare C.L."/>
            <person name="Sandberg G."/>
            <person name="Noel J.P."/>
            <person name="Chory J."/>
        </authorList>
    </citation>
    <scope>X-RAY CRYSTALLOGRAPHY (2.25 ANGSTROMS) IN COMPLEX WITH PYRIDOXAMINE PHOSPHATE</scope>
    <scope>FUNCTION</scope>
    <scope>BIOPHYSICOCHEMICAL PROPERTIES</scope>
    <scope>SUBCELLULAR LOCATION</scope>
    <scope>TISSUE SPECIFICITY</scope>
    <scope>DEVELOPMENTAL STAGE</scope>
    <scope>INDUCTION BY SHADE</scope>
    <scope>DISRUPTION PHENOTYPE</scope>
    <scope>MUTAGENESIS OF LYS-217 AND GLY-250</scope>
</reference>
<protein>
    <recommendedName>
        <fullName>L-tryptophan--pyruvate aminotransferase 1</fullName>
        <ecNumber>2.6.1.27</ecNumber>
        <ecNumber>2.6.1.99</ecNumber>
    </recommendedName>
    <alternativeName>
        <fullName>Protein CYTOKININ INDUCED ROOT CURLING 1</fullName>
    </alternativeName>
    <alternativeName>
        <fullName>Protein SHADE AVOIDANCE 3</fullName>
    </alternativeName>
    <alternativeName>
        <fullName>Protein TRANSPORT INHIBITOR RESPONSE 2</fullName>
    </alternativeName>
    <alternativeName>
        <fullName>Protein TRYPTOPHAN AMINOTRANSFERASE OF ARABIDOPSIS 1</fullName>
    </alternativeName>
    <alternativeName>
        <fullName>Protein WEAK ETHYLENE INSENSITIVE 8</fullName>
    </alternativeName>
    <alternativeName>
        <fullName>Tryptophan transaminase</fullName>
    </alternativeName>
</protein>
<organism>
    <name type="scientific">Arabidopsis thaliana</name>
    <name type="common">Mouse-ear cress</name>
    <dbReference type="NCBI Taxonomy" id="3702"/>
    <lineage>
        <taxon>Eukaryota</taxon>
        <taxon>Viridiplantae</taxon>
        <taxon>Streptophyta</taxon>
        <taxon>Embryophyta</taxon>
        <taxon>Tracheophyta</taxon>
        <taxon>Spermatophyta</taxon>
        <taxon>Magnoliopsida</taxon>
        <taxon>eudicotyledons</taxon>
        <taxon>Gunneridae</taxon>
        <taxon>Pentapetalae</taxon>
        <taxon>rosids</taxon>
        <taxon>malvids</taxon>
        <taxon>Brassicales</taxon>
        <taxon>Brassicaceae</taxon>
        <taxon>Camelineae</taxon>
        <taxon>Arabidopsis</taxon>
    </lineage>
</organism>